<feature type="chain" id="PRO_0000311087" description="tRNA-queuosine alpha-mannosyltransferase">
    <location>
        <begin position="1"/>
        <end position="366"/>
    </location>
</feature>
<gene>
    <name type="primary">GTDC1</name>
    <name evidence="1" type="synonym">QTMAN</name>
</gene>
<evidence type="ECO:0000250" key="1">
    <source>
        <dbReference type="UniProtKB" id="Q4AE62"/>
    </source>
</evidence>
<evidence type="ECO:0000305" key="2"/>
<name>QTMAN_BOVIN</name>
<comment type="function">
    <text evidence="1">Glycosyltransferase that specifically catalyzes mannosylation of cytoplasmic tRNA(Asp) modified with queuosine at position 34 (queuosine(34)). Mannosylates the cyclopentene moiety of queuosine(34) in tRNA(Asp) to form mannosyl-queuosine(34). Mannosylation of queuosine(34) in tRNA(Asp) is required to slow-down elongation at cognate codons, GAC and GAU, thereby regulating protein translation.</text>
</comment>
<comment type="catalytic activity">
    <reaction evidence="1">
        <text>queuosine(34) in tRNA(Asp) + GDP-alpha-D-mannose = O-4''-alpha-D-mannosylqueuosine(34) in tRNA(Asp) + GDP + H(+)</text>
        <dbReference type="Rhea" id="RHEA:12885"/>
        <dbReference type="Rhea" id="RHEA-COMP:18572"/>
        <dbReference type="Rhea" id="RHEA-COMP:18581"/>
        <dbReference type="ChEBI" id="CHEBI:15378"/>
        <dbReference type="ChEBI" id="CHEBI:57527"/>
        <dbReference type="ChEBI" id="CHEBI:58189"/>
        <dbReference type="ChEBI" id="CHEBI:194431"/>
        <dbReference type="ChEBI" id="CHEBI:194442"/>
        <dbReference type="EC" id="2.4.1.110"/>
    </reaction>
    <physiologicalReaction direction="left-to-right" evidence="1">
        <dbReference type="Rhea" id="RHEA:12886"/>
    </physiologicalReaction>
</comment>
<comment type="subcellular location">
    <subcellularLocation>
        <location evidence="1">Cytoplasm</location>
    </subcellularLocation>
    <subcellularLocation>
        <location evidence="1">Nucleus</location>
    </subcellularLocation>
</comment>
<comment type="similarity">
    <text evidence="2">Belongs to the glycosyltransferase group 1 family. Glycosyltransferase 4 subfamily.</text>
</comment>
<dbReference type="EC" id="2.4.1.110" evidence="1"/>
<dbReference type="EMBL" id="BC123857">
    <property type="protein sequence ID" value="AAI23858.1"/>
    <property type="molecule type" value="mRNA"/>
</dbReference>
<dbReference type="RefSeq" id="NP_001069503.1">
    <property type="nucleotide sequence ID" value="NM_001076035.1"/>
</dbReference>
<dbReference type="FunCoup" id="Q08DA7">
    <property type="interactions" value="1415"/>
</dbReference>
<dbReference type="STRING" id="9913.ENSBTAP00000059681"/>
<dbReference type="CAZy" id="GT4">
    <property type="family name" value="Glycosyltransferase Family 4"/>
</dbReference>
<dbReference type="PaxDb" id="9913-ENSBTAP00000001505"/>
<dbReference type="Ensembl" id="ENSBTAT00000001505.6">
    <property type="protein sequence ID" value="ENSBTAP00000001505.5"/>
    <property type="gene ID" value="ENSBTAG00000001132.7"/>
</dbReference>
<dbReference type="GeneID" id="534677"/>
<dbReference type="KEGG" id="bta:534677"/>
<dbReference type="CTD" id="79712"/>
<dbReference type="VEuPathDB" id="HostDB:ENSBTAG00000001132"/>
<dbReference type="VGNC" id="VGNC:29690">
    <property type="gene designation" value="GTDC1"/>
</dbReference>
<dbReference type="eggNOG" id="ENOG502QQJ3">
    <property type="taxonomic scope" value="Eukaryota"/>
</dbReference>
<dbReference type="GeneTree" id="ENSGT00390000006631"/>
<dbReference type="HOGENOM" id="CLU_033439_1_0_1"/>
<dbReference type="InParanoid" id="Q08DA7"/>
<dbReference type="OrthoDB" id="10032790at2759"/>
<dbReference type="TreeFam" id="TF324818"/>
<dbReference type="Proteomes" id="UP000009136">
    <property type="component" value="Chromosome 2"/>
</dbReference>
<dbReference type="Bgee" id="ENSBTAG00000001132">
    <property type="expression patterns" value="Expressed in occipital lobe and 107 other cell types or tissues"/>
</dbReference>
<dbReference type="GO" id="GO:0005737">
    <property type="term" value="C:cytoplasm"/>
    <property type="evidence" value="ECO:0000250"/>
    <property type="project" value="UniProtKB"/>
</dbReference>
<dbReference type="GO" id="GO:0005634">
    <property type="term" value="C:nucleus"/>
    <property type="evidence" value="ECO:0000250"/>
    <property type="project" value="UniProtKB"/>
</dbReference>
<dbReference type="GO" id="GO:0016438">
    <property type="term" value="F:tRNA-queuosine(34) beta-mannosyltransferase activity"/>
    <property type="evidence" value="ECO:0000250"/>
    <property type="project" value="UniProtKB"/>
</dbReference>
<dbReference type="GO" id="GO:0006417">
    <property type="term" value="P:regulation of translation"/>
    <property type="evidence" value="ECO:0000250"/>
    <property type="project" value="UniProtKB"/>
</dbReference>
<dbReference type="GO" id="GO:0006400">
    <property type="term" value="P:tRNA modification"/>
    <property type="evidence" value="ECO:0000250"/>
    <property type="project" value="UniProtKB"/>
</dbReference>
<dbReference type="InterPro" id="IPR051862">
    <property type="entry name" value="GT-like_domain_containing_1"/>
</dbReference>
<dbReference type="InterPro" id="IPR022701">
    <property type="entry name" value="QTMAN_N"/>
</dbReference>
<dbReference type="PANTHER" id="PTHR13615">
    <property type="entry name" value="GLYCOSYLTRANSFERASE-LIKE 1"/>
    <property type="match status" value="1"/>
</dbReference>
<dbReference type="PANTHER" id="PTHR13615:SF3">
    <property type="entry name" value="GLYCOSYLTRANSFERASE-LIKE DOMAIN-CONTAINING PROTEIN 1"/>
    <property type="match status" value="1"/>
</dbReference>
<dbReference type="Pfam" id="PF12038">
    <property type="entry name" value="QTMAN_N"/>
    <property type="match status" value="1"/>
</dbReference>
<reference key="1">
    <citation type="submission" date="2006-09" db="EMBL/GenBank/DDBJ databases">
        <authorList>
            <consortium name="NIH - Mammalian Gene Collection (MGC) project"/>
        </authorList>
    </citation>
    <scope>NUCLEOTIDE SEQUENCE [LARGE SCALE MRNA]</scope>
    <source>
        <strain>Hereford</strain>
        <tissue>Basal ganglia</tissue>
    </source>
</reference>
<proteinExistence type="evidence at transcript level"/>
<keyword id="KW-0963">Cytoplasm</keyword>
<keyword id="KW-0328">Glycosyltransferase</keyword>
<keyword id="KW-0539">Nucleus</keyword>
<keyword id="KW-1185">Reference proteome</keyword>
<keyword id="KW-0808">Transferase</keyword>
<protein>
    <recommendedName>
        <fullName evidence="2">tRNA-queuosine alpha-mannosyltransferase</fullName>
        <shortName evidence="2">QTMAN</shortName>
        <ecNumber evidence="1">2.4.1.110</ecNumber>
    </recommendedName>
    <alternativeName>
        <fullName evidence="2">Glycosyltransferase-like domain-containing protein 1</fullName>
    </alternativeName>
</protein>
<accession>Q08DA7</accession>
<organism>
    <name type="scientific">Bos taurus</name>
    <name type="common">Bovine</name>
    <dbReference type="NCBI Taxonomy" id="9913"/>
    <lineage>
        <taxon>Eukaryota</taxon>
        <taxon>Metazoa</taxon>
        <taxon>Chordata</taxon>
        <taxon>Craniata</taxon>
        <taxon>Vertebrata</taxon>
        <taxon>Euteleostomi</taxon>
        <taxon>Mammalia</taxon>
        <taxon>Eutheria</taxon>
        <taxon>Laurasiatheria</taxon>
        <taxon>Artiodactyla</taxon>
        <taxon>Ruminantia</taxon>
        <taxon>Pecora</taxon>
        <taxon>Bovidae</taxon>
        <taxon>Bovinae</taxon>
        <taxon>Bos</taxon>
    </lineage>
</organism>
<sequence length="366" mass="42174">MSILILEAFYGGSHKQLVDLLQEELEDSVLYTLPAKKWHWRARTSALYFSQNIPTSEHYRILFASSVLNLTELAALRPDLGKLKKILYFHENQLVYPVKKCQERDFQYGYNQILSCLVADVVVFNSVFNMESFLTSIGKFMKLIPDHRPKDLESIIRPKCQVIYFPIRFPDVSRFMPKHKAAHLQKILSLKENGGNAPSTALPFQQQLRGSENLLKSFDSKSGPCDAAQQESLGCSVRQASYLKTFNSSDDSSTHHGEHKQNRCDVLAEADDQQRPLHIVWPHRWLEAVYCGCYPLCPKDLVYPEIFPAEYLYSTPEQLSKRLQNFCKRPDITRKHLYKGEMAPFSWAALHGKFRSLLTAEPREDL</sequence>